<dbReference type="EC" id="6.3.2.8" evidence="1"/>
<dbReference type="EMBL" id="CP001389">
    <property type="protein sequence ID" value="ACP25869.1"/>
    <property type="molecule type" value="Genomic_DNA"/>
</dbReference>
<dbReference type="RefSeq" id="WP_012708632.1">
    <property type="nucleotide sequence ID" value="NC_012587.1"/>
</dbReference>
<dbReference type="RefSeq" id="YP_002826622.1">
    <property type="nucleotide sequence ID" value="NC_012587.1"/>
</dbReference>
<dbReference type="SMR" id="C3MEM8"/>
<dbReference type="STRING" id="394.NGR_c21060"/>
<dbReference type="KEGG" id="rhi:NGR_c21060"/>
<dbReference type="PATRIC" id="fig|394.7.peg.4931"/>
<dbReference type="eggNOG" id="COG0773">
    <property type="taxonomic scope" value="Bacteria"/>
</dbReference>
<dbReference type="HOGENOM" id="CLU_028104_2_2_5"/>
<dbReference type="OrthoDB" id="9804126at2"/>
<dbReference type="UniPathway" id="UPA00219"/>
<dbReference type="Proteomes" id="UP000001054">
    <property type="component" value="Chromosome"/>
</dbReference>
<dbReference type="GO" id="GO:0005737">
    <property type="term" value="C:cytoplasm"/>
    <property type="evidence" value="ECO:0007669"/>
    <property type="project" value="UniProtKB-SubCell"/>
</dbReference>
<dbReference type="GO" id="GO:0005524">
    <property type="term" value="F:ATP binding"/>
    <property type="evidence" value="ECO:0007669"/>
    <property type="project" value="UniProtKB-UniRule"/>
</dbReference>
<dbReference type="GO" id="GO:0008763">
    <property type="term" value="F:UDP-N-acetylmuramate-L-alanine ligase activity"/>
    <property type="evidence" value="ECO:0007669"/>
    <property type="project" value="UniProtKB-UniRule"/>
</dbReference>
<dbReference type="GO" id="GO:0051301">
    <property type="term" value="P:cell division"/>
    <property type="evidence" value="ECO:0007669"/>
    <property type="project" value="UniProtKB-KW"/>
</dbReference>
<dbReference type="GO" id="GO:0071555">
    <property type="term" value="P:cell wall organization"/>
    <property type="evidence" value="ECO:0007669"/>
    <property type="project" value="UniProtKB-KW"/>
</dbReference>
<dbReference type="GO" id="GO:0009252">
    <property type="term" value="P:peptidoglycan biosynthetic process"/>
    <property type="evidence" value="ECO:0007669"/>
    <property type="project" value="UniProtKB-UniRule"/>
</dbReference>
<dbReference type="GO" id="GO:0008360">
    <property type="term" value="P:regulation of cell shape"/>
    <property type="evidence" value="ECO:0007669"/>
    <property type="project" value="UniProtKB-KW"/>
</dbReference>
<dbReference type="Gene3D" id="3.90.190.20">
    <property type="entry name" value="Mur ligase, C-terminal domain"/>
    <property type="match status" value="1"/>
</dbReference>
<dbReference type="Gene3D" id="3.40.1190.10">
    <property type="entry name" value="Mur-like, catalytic domain"/>
    <property type="match status" value="1"/>
</dbReference>
<dbReference type="Gene3D" id="3.40.50.720">
    <property type="entry name" value="NAD(P)-binding Rossmann-like Domain"/>
    <property type="match status" value="1"/>
</dbReference>
<dbReference type="HAMAP" id="MF_00046">
    <property type="entry name" value="MurC"/>
    <property type="match status" value="1"/>
</dbReference>
<dbReference type="InterPro" id="IPR036565">
    <property type="entry name" value="Mur-like_cat_sf"/>
</dbReference>
<dbReference type="InterPro" id="IPR004101">
    <property type="entry name" value="Mur_ligase_C"/>
</dbReference>
<dbReference type="InterPro" id="IPR036615">
    <property type="entry name" value="Mur_ligase_C_dom_sf"/>
</dbReference>
<dbReference type="InterPro" id="IPR013221">
    <property type="entry name" value="Mur_ligase_cen"/>
</dbReference>
<dbReference type="InterPro" id="IPR000713">
    <property type="entry name" value="Mur_ligase_N"/>
</dbReference>
<dbReference type="InterPro" id="IPR050061">
    <property type="entry name" value="MurCDEF_pg_biosynth"/>
</dbReference>
<dbReference type="InterPro" id="IPR005758">
    <property type="entry name" value="UDP-N-AcMur_Ala_ligase_MurC"/>
</dbReference>
<dbReference type="NCBIfam" id="TIGR01082">
    <property type="entry name" value="murC"/>
    <property type="match status" value="1"/>
</dbReference>
<dbReference type="PANTHER" id="PTHR43445:SF3">
    <property type="entry name" value="UDP-N-ACETYLMURAMATE--L-ALANINE LIGASE"/>
    <property type="match status" value="1"/>
</dbReference>
<dbReference type="PANTHER" id="PTHR43445">
    <property type="entry name" value="UDP-N-ACETYLMURAMATE--L-ALANINE LIGASE-RELATED"/>
    <property type="match status" value="1"/>
</dbReference>
<dbReference type="Pfam" id="PF01225">
    <property type="entry name" value="Mur_ligase"/>
    <property type="match status" value="1"/>
</dbReference>
<dbReference type="Pfam" id="PF02875">
    <property type="entry name" value="Mur_ligase_C"/>
    <property type="match status" value="1"/>
</dbReference>
<dbReference type="Pfam" id="PF08245">
    <property type="entry name" value="Mur_ligase_M"/>
    <property type="match status" value="1"/>
</dbReference>
<dbReference type="SUPFAM" id="SSF51984">
    <property type="entry name" value="MurCD N-terminal domain"/>
    <property type="match status" value="1"/>
</dbReference>
<dbReference type="SUPFAM" id="SSF53623">
    <property type="entry name" value="MurD-like peptide ligases, catalytic domain"/>
    <property type="match status" value="1"/>
</dbReference>
<dbReference type="SUPFAM" id="SSF53244">
    <property type="entry name" value="MurD-like peptide ligases, peptide-binding domain"/>
    <property type="match status" value="1"/>
</dbReference>
<accession>C3MEM8</accession>
<keyword id="KW-0067">ATP-binding</keyword>
<keyword id="KW-0131">Cell cycle</keyword>
<keyword id="KW-0132">Cell division</keyword>
<keyword id="KW-0133">Cell shape</keyword>
<keyword id="KW-0961">Cell wall biogenesis/degradation</keyword>
<keyword id="KW-0963">Cytoplasm</keyword>
<keyword id="KW-0436">Ligase</keyword>
<keyword id="KW-0547">Nucleotide-binding</keyword>
<keyword id="KW-0573">Peptidoglycan synthesis</keyword>
<keyword id="KW-1185">Reference proteome</keyword>
<reference key="1">
    <citation type="journal article" date="2009" name="Appl. Environ. Microbiol.">
        <title>Rhizobium sp. strain NGR234 possesses a remarkable number of secretion systems.</title>
        <authorList>
            <person name="Schmeisser C."/>
            <person name="Liesegang H."/>
            <person name="Krysciak D."/>
            <person name="Bakkou N."/>
            <person name="Le Quere A."/>
            <person name="Wollherr A."/>
            <person name="Heinemeyer I."/>
            <person name="Morgenstern B."/>
            <person name="Pommerening-Roeser A."/>
            <person name="Flores M."/>
            <person name="Palacios R."/>
            <person name="Brenner S."/>
            <person name="Gottschalk G."/>
            <person name="Schmitz R.A."/>
            <person name="Broughton W.J."/>
            <person name="Perret X."/>
            <person name="Strittmatter A.W."/>
            <person name="Streit W.R."/>
        </authorList>
    </citation>
    <scope>NUCLEOTIDE SEQUENCE [LARGE SCALE GENOMIC DNA]</scope>
    <source>
        <strain>NBRC 101917 / NGR234</strain>
    </source>
</reference>
<name>MURC_SINFN</name>
<proteinExistence type="inferred from homology"/>
<organism>
    <name type="scientific">Sinorhizobium fredii (strain NBRC 101917 / NGR234)</name>
    <dbReference type="NCBI Taxonomy" id="394"/>
    <lineage>
        <taxon>Bacteria</taxon>
        <taxon>Pseudomonadati</taxon>
        <taxon>Pseudomonadota</taxon>
        <taxon>Alphaproteobacteria</taxon>
        <taxon>Hyphomicrobiales</taxon>
        <taxon>Rhizobiaceae</taxon>
        <taxon>Sinorhizobium/Ensifer group</taxon>
        <taxon>Sinorhizobium</taxon>
    </lineage>
</organism>
<evidence type="ECO:0000255" key="1">
    <source>
        <dbReference type="HAMAP-Rule" id="MF_00046"/>
    </source>
</evidence>
<comment type="function">
    <text evidence="1">Cell wall formation.</text>
</comment>
<comment type="catalytic activity">
    <reaction evidence="1">
        <text>UDP-N-acetyl-alpha-D-muramate + L-alanine + ATP = UDP-N-acetyl-alpha-D-muramoyl-L-alanine + ADP + phosphate + H(+)</text>
        <dbReference type="Rhea" id="RHEA:23372"/>
        <dbReference type="ChEBI" id="CHEBI:15378"/>
        <dbReference type="ChEBI" id="CHEBI:30616"/>
        <dbReference type="ChEBI" id="CHEBI:43474"/>
        <dbReference type="ChEBI" id="CHEBI:57972"/>
        <dbReference type="ChEBI" id="CHEBI:70757"/>
        <dbReference type="ChEBI" id="CHEBI:83898"/>
        <dbReference type="ChEBI" id="CHEBI:456216"/>
        <dbReference type="EC" id="6.3.2.8"/>
    </reaction>
</comment>
<comment type="pathway">
    <text evidence="1">Cell wall biogenesis; peptidoglycan biosynthesis.</text>
</comment>
<comment type="subcellular location">
    <subcellularLocation>
        <location evidence="1">Cytoplasm</location>
    </subcellularLocation>
</comment>
<comment type="similarity">
    <text evidence="1">Belongs to the MurCDEF family.</text>
</comment>
<protein>
    <recommendedName>
        <fullName evidence="1">UDP-N-acetylmuramate--L-alanine ligase</fullName>
        <ecNumber evidence="1">6.3.2.8</ecNumber>
    </recommendedName>
    <alternativeName>
        <fullName evidence="1">UDP-N-acetylmuramoyl-L-alanine synthetase</fullName>
    </alternativeName>
</protein>
<gene>
    <name evidence="1" type="primary">murC</name>
    <name type="ordered locus">NGR_c21060</name>
</gene>
<sequence length="469" mass="50346">MKMPKTIGLVHFIGIGGIGMSGIAEVLHNLGHRVQGSDQSDSANVQRLREKGIKISVGHKAENLGDAEVVVVSTAIKKDNPELIAAREKFLPVVRRAEMLAELMRFRNAIAIGGTHGKTTTTSMVAALLDAGGLDPTVINGGIINAYGTNARMGAGEWMVVEADESDGTFLKLPADIAVVTNIDPEHLDHYGNFDAVRAAFRQFVENVPFYGFGVLCLDHPEVQSMVGKIEDRKVITYGENPQADVRYHNVRMDGATSVFDVEIRRRRTGQVIQLNGLRLPMPGRHNVSNATAAVAVAQRLGMEPEAIAKGLASFGGVKRRFTLTGEWNGASIFDDYGHHPVEIKAVLRAAREACQGRIVAVHQPHRYSRLSSLFEDFSACFNDADTILIAPVYAAGEDAIDGVNSQALVNSIKAAGHRDAQFLTGPEALAPVVSKIAQPGDFVVLLGAGSITYWAAALPKELAEISGS</sequence>
<feature type="chain" id="PRO_1000192106" description="UDP-N-acetylmuramate--L-alanine ligase">
    <location>
        <begin position="1"/>
        <end position="469"/>
    </location>
</feature>
<feature type="binding site" evidence="1">
    <location>
        <begin position="114"/>
        <end position="120"/>
    </location>
    <ligand>
        <name>ATP</name>
        <dbReference type="ChEBI" id="CHEBI:30616"/>
    </ligand>
</feature>